<feature type="chain" id="PRO_0000399014" description="Damage-regulated import facilitator 1">
    <location>
        <begin position="1"/>
        <end position="133"/>
    </location>
</feature>
<feature type="region of interest" description="Disordered" evidence="2">
    <location>
        <begin position="1"/>
        <end position="40"/>
    </location>
</feature>
<feature type="compositionally biased region" description="Low complexity" evidence="2">
    <location>
        <begin position="16"/>
        <end position="32"/>
    </location>
</feature>
<comment type="function">
    <text evidence="1">Mediates the nuclear localization of RNR2 and RNR4, 2 subunits of the ribonucleotide reductase.</text>
</comment>
<comment type="subunit">
    <text evidence="1">Interacts with RNR2 and RNR4.</text>
</comment>
<comment type="subcellular location">
    <subcellularLocation>
        <location evidence="1">Cytoplasm</location>
    </subcellularLocation>
    <subcellularLocation>
        <location evidence="1">Nucleus</location>
    </subcellularLocation>
</comment>
<comment type="PTM">
    <text evidence="1">Phosphorylated by DUN1 in response to DNA damage which leads to its degradation.</text>
</comment>
<comment type="similarity">
    <text evidence="3">Belongs to the DIF1/spd1 family.</text>
</comment>
<name>DIF1_YEAS1</name>
<evidence type="ECO:0000250" key="1"/>
<evidence type="ECO:0000256" key="2">
    <source>
        <dbReference type="SAM" id="MobiDB-lite"/>
    </source>
</evidence>
<evidence type="ECO:0000305" key="3"/>
<gene>
    <name type="primary">DIF1</name>
    <name type="ORF">SCRG_04374</name>
</gene>
<sequence length="133" mass="15135">MDAQLEWASSLVPKRQLQQQQQQQEQQQQQQQDFHKDQLMTVGMRIRQRVDQGYASRTPSTSDASLQPGVIRDYSSVIVPQFTRSPLPTANSLPPMLINQRTMSTEASSLEKWDVAEPAAEHEAMVNGSKRRL</sequence>
<accession>B3RHU5</accession>
<reference key="1">
    <citation type="submission" date="2005-03" db="EMBL/GenBank/DDBJ databases">
        <title>Annotation of the Saccharomyces cerevisiae RM11-1a genome.</title>
        <authorList>
            <consortium name="The Broad Institute Genome Sequencing Platform"/>
            <person name="Birren B.W."/>
            <person name="Lander E.S."/>
            <person name="Galagan J.E."/>
            <person name="Nusbaum C."/>
            <person name="Devon K."/>
            <person name="Cuomo C."/>
            <person name="Jaffe D.B."/>
            <person name="Butler J."/>
            <person name="Alvarez P."/>
            <person name="Gnerre S."/>
            <person name="Grabherr M."/>
            <person name="Kleber M."/>
            <person name="Mauceli E.W."/>
            <person name="Brockman W."/>
            <person name="MacCallum I.A."/>
            <person name="Rounsley S."/>
            <person name="Young S.K."/>
            <person name="LaButti K."/>
            <person name="Pushparaj V."/>
            <person name="DeCaprio D."/>
            <person name="Crawford M."/>
            <person name="Koehrsen M."/>
            <person name="Engels R."/>
            <person name="Montgomery P."/>
            <person name="Pearson M."/>
            <person name="Howarth C."/>
            <person name="Larson L."/>
            <person name="Luoma S."/>
            <person name="White J."/>
            <person name="O'Leary S."/>
            <person name="Kodira C.D."/>
            <person name="Zeng Q."/>
            <person name="Yandava C."/>
            <person name="Alvarado L."/>
            <person name="Pratt S."/>
            <person name="Kruglyak L."/>
        </authorList>
    </citation>
    <scope>NUCLEOTIDE SEQUENCE [LARGE SCALE GENOMIC DNA]</scope>
    <source>
        <strain>RM11-1a</strain>
    </source>
</reference>
<dbReference type="EMBL" id="DS981519">
    <property type="protein sequence ID" value="EDV08739.1"/>
    <property type="molecule type" value="Genomic_DNA"/>
</dbReference>
<dbReference type="SMR" id="B3RHU5"/>
<dbReference type="HOGENOM" id="CLU_1887371_0_0_1"/>
<dbReference type="OrthoDB" id="25352at4893"/>
<dbReference type="Proteomes" id="UP000008335">
    <property type="component" value="Unassembled WGS sequence"/>
</dbReference>
<dbReference type="GO" id="GO:0005737">
    <property type="term" value="C:cytoplasm"/>
    <property type="evidence" value="ECO:0007669"/>
    <property type="project" value="UniProtKB-SubCell"/>
</dbReference>
<dbReference type="GO" id="GO:0005634">
    <property type="term" value="C:nucleus"/>
    <property type="evidence" value="ECO:0007669"/>
    <property type="project" value="UniProtKB-SubCell"/>
</dbReference>
<dbReference type="GO" id="GO:1990846">
    <property type="term" value="F:ribonucleoside-diphosphate reductase inhibitor activity"/>
    <property type="evidence" value="ECO:0007669"/>
    <property type="project" value="TreeGrafter"/>
</dbReference>
<dbReference type="GO" id="GO:0008104">
    <property type="term" value="P:protein localization"/>
    <property type="evidence" value="ECO:0007669"/>
    <property type="project" value="TreeGrafter"/>
</dbReference>
<dbReference type="InterPro" id="IPR013900">
    <property type="entry name" value="RNR_inhibitor"/>
</dbReference>
<dbReference type="PANTHER" id="PTHR28081:SF1">
    <property type="entry name" value="DAMAGE-REGULATED IMPORT FACILITATOR 1"/>
    <property type="match status" value="1"/>
</dbReference>
<dbReference type="PANTHER" id="PTHR28081">
    <property type="entry name" value="DAMAGE-REGULATED IMPORT FACILITATOR 1-RELATED"/>
    <property type="match status" value="1"/>
</dbReference>
<keyword id="KW-0963">Cytoplasm</keyword>
<keyword id="KW-0539">Nucleus</keyword>
<keyword id="KW-0597">Phosphoprotein</keyword>
<proteinExistence type="inferred from homology"/>
<organism>
    <name type="scientific">Saccharomyces cerevisiae (strain RM11-1a)</name>
    <name type="common">Baker's yeast</name>
    <dbReference type="NCBI Taxonomy" id="285006"/>
    <lineage>
        <taxon>Eukaryota</taxon>
        <taxon>Fungi</taxon>
        <taxon>Dikarya</taxon>
        <taxon>Ascomycota</taxon>
        <taxon>Saccharomycotina</taxon>
        <taxon>Saccharomycetes</taxon>
        <taxon>Saccharomycetales</taxon>
        <taxon>Saccharomycetaceae</taxon>
        <taxon>Saccharomyces</taxon>
    </lineage>
</organism>
<protein>
    <recommendedName>
        <fullName>Damage-regulated import facilitator 1</fullName>
    </recommendedName>
</protein>